<feature type="chain" id="PRO_0000173421" description="Multidrug resistance protein fnx1">
    <location>
        <begin position="1"/>
        <end position="531"/>
    </location>
</feature>
<feature type="topological domain" description="Cytoplasmic" evidence="1">
    <location>
        <begin position="1"/>
        <end position="30"/>
    </location>
</feature>
<feature type="transmembrane region" description="Helical" evidence="1">
    <location>
        <begin position="31"/>
        <end position="51"/>
    </location>
</feature>
<feature type="topological domain" description="Lumenal" evidence="1">
    <location>
        <begin position="52"/>
        <end position="225"/>
    </location>
</feature>
<feature type="transmembrane region" description="Helical" evidence="1">
    <location>
        <begin position="226"/>
        <end position="246"/>
    </location>
</feature>
<feature type="topological domain" description="Cytoplasmic" evidence="1">
    <location>
        <begin position="247"/>
        <end position="252"/>
    </location>
</feature>
<feature type="transmembrane region" description="Helical" evidence="1">
    <location>
        <begin position="253"/>
        <end position="273"/>
    </location>
</feature>
<feature type="topological domain" description="Lumenal" evidence="1">
    <location>
        <begin position="274"/>
        <end position="297"/>
    </location>
</feature>
<feature type="transmembrane region" description="Helical" evidence="1">
    <location>
        <begin position="298"/>
        <end position="318"/>
    </location>
</feature>
<feature type="topological domain" description="Cytoplasmic" evidence="1">
    <location>
        <begin position="319"/>
        <end position="360"/>
    </location>
</feature>
<feature type="transmembrane region" description="Helical" evidence="1">
    <location>
        <begin position="361"/>
        <end position="381"/>
    </location>
</feature>
<feature type="topological domain" description="Lumenal" evidence="1">
    <location>
        <begin position="382"/>
        <end position="385"/>
    </location>
</feature>
<feature type="transmembrane region" description="Helical" evidence="1">
    <location>
        <begin position="386"/>
        <end position="406"/>
    </location>
</feature>
<feature type="topological domain" description="Cytoplasmic" evidence="1">
    <location>
        <begin position="407"/>
        <end position="496"/>
    </location>
</feature>
<feature type="transmembrane region" description="Helical" evidence="1">
    <location>
        <begin position="497"/>
        <end position="517"/>
    </location>
</feature>
<feature type="topological domain" description="Lumenal" evidence="1">
    <location>
        <begin position="518"/>
        <end position="531"/>
    </location>
</feature>
<feature type="sequence conflict" description="In Ref. 1; AAC32768." evidence="5" ref="1">
    <original>V</original>
    <variation>A</variation>
    <location>
        <position position="72"/>
    </location>
</feature>
<feature type="sequence conflict" description="In Ref. 1; AAC32768." evidence="5" ref="1">
    <original>NVCLGN</original>
    <variation>ECLFGY</variation>
    <location>
        <begin position="295"/>
        <end position="300"/>
    </location>
</feature>
<feature type="sequence conflict" description="In Ref. 1; AAC32768." evidence="5" ref="1">
    <original>MPSSEAGVRI</original>
    <variation>CHRLRPVFVS</variation>
    <location>
        <begin position="324"/>
        <end position="333"/>
    </location>
</feature>
<dbReference type="EMBL" id="AF029304">
    <property type="protein sequence ID" value="AAC32768.1"/>
    <property type="molecule type" value="Genomic_DNA"/>
</dbReference>
<dbReference type="EMBL" id="CU329671">
    <property type="protein sequence ID" value="CAA20760.1"/>
    <property type="molecule type" value="Genomic_DNA"/>
</dbReference>
<dbReference type="EMBL" id="AB027935">
    <property type="protein sequence ID" value="BAA87239.1"/>
    <property type="molecule type" value="Genomic_DNA"/>
</dbReference>
<dbReference type="PIR" id="T43551">
    <property type="entry name" value="T43551"/>
</dbReference>
<dbReference type="RefSeq" id="NP_596009.1">
    <property type="nucleotide sequence ID" value="NM_001021917.2"/>
</dbReference>
<dbReference type="SMR" id="Q09752"/>
<dbReference type="BioGRID" id="276336">
    <property type="interactions" value="3"/>
</dbReference>
<dbReference type="FunCoup" id="Q09752">
    <property type="interactions" value="24"/>
</dbReference>
<dbReference type="STRING" id="284812.Q09752"/>
<dbReference type="TCDB" id="2.A.1.48.3">
    <property type="family name" value="the major facilitator superfamily (mfs)"/>
</dbReference>
<dbReference type="iPTMnet" id="Q09752"/>
<dbReference type="PaxDb" id="4896-SPBC12C2.13c.1"/>
<dbReference type="EnsemblFungi" id="SPBC12C2.13c.1">
    <property type="protein sequence ID" value="SPBC12C2.13c.1:pep"/>
    <property type="gene ID" value="SPBC12C2.13c"/>
</dbReference>
<dbReference type="GeneID" id="2539786"/>
<dbReference type="KEGG" id="spo:2539786"/>
<dbReference type="PomBase" id="SPBC12C2.13c">
    <property type="gene designation" value="fnx1"/>
</dbReference>
<dbReference type="VEuPathDB" id="FungiDB:SPBC12C2.13c"/>
<dbReference type="eggNOG" id="KOG0254">
    <property type="taxonomic scope" value="Eukaryota"/>
</dbReference>
<dbReference type="HOGENOM" id="CLU_000960_22_3_1"/>
<dbReference type="InParanoid" id="Q09752"/>
<dbReference type="OMA" id="PLMPWHI"/>
<dbReference type="PhylomeDB" id="Q09752"/>
<dbReference type="PRO" id="PR:Q09752"/>
<dbReference type="Proteomes" id="UP000002485">
    <property type="component" value="Chromosome II"/>
</dbReference>
<dbReference type="GO" id="GO:0000324">
    <property type="term" value="C:fungal-type vacuole"/>
    <property type="evidence" value="ECO:0007005"/>
    <property type="project" value="PomBase"/>
</dbReference>
<dbReference type="GO" id="GO:0000329">
    <property type="term" value="C:fungal-type vacuole membrane"/>
    <property type="evidence" value="ECO:0000314"/>
    <property type="project" value="PomBase"/>
</dbReference>
<dbReference type="GO" id="GO:0015174">
    <property type="term" value="F:basic amino acid transmembrane transporter activity"/>
    <property type="evidence" value="ECO:0000318"/>
    <property type="project" value="GO_Central"/>
</dbReference>
<dbReference type="GO" id="GO:0015182">
    <property type="term" value="F:L-asparagine transmembrane transporter activity"/>
    <property type="evidence" value="ECO:0000315"/>
    <property type="project" value="PomBase"/>
</dbReference>
<dbReference type="GO" id="GO:0015188">
    <property type="term" value="F:L-isoleucine transmembrane transporter activity"/>
    <property type="evidence" value="ECO:0000315"/>
    <property type="project" value="PomBase"/>
</dbReference>
<dbReference type="GO" id="GO:0015189">
    <property type="term" value="F:L-lysine transmembrane transporter activity"/>
    <property type="evidence" value="ECO:0000315"/>
    <property type="project" value="PomBase"/>
</dbReference>
<dbReference type="GO" id="GO:1990591">
    <property type="term" value="P:asparagine transmembrane import into vacuole"/>
    <property type="evidence" value="ECO:0000315"/>
    <property type="project" value="PomBase"/>
</dbReference>
<dbReference type="GO" id="GO:0015802">
    <property type="term" value="P:basic amino acid transport"/>
    <property type="evidence" value="ECO:0000318"/>
    <property type="project" value="GO_Central"/>
</dbReference>
<dbReference type="GO" id="GO:1903714">
    <property type="term" value="P:isoleucine transmembrane transport"/>
    <property type="evidence" value="ECO:0000315"/>
    <property type="project" value="PomBase"/>
</dbReference>
<dbReference type="GO" id="GO:1901482">
    <property type="term" value="P:L-lysine import into vacuole involved in cellular response to nitrogen starvation"/>
    <property type="evidence" value="ECO:0000315"/>
    <property type="project" value="PomBase"/>
</dbReference>
<dbReference type="GO" id="GO:0055085">
    <property type="term" value="P:transmembrane transport"/>
    <property type="evidence" value="ECO:0000318"/>
    <property type="project" value="GO_Central"/>
</dbReference>
<dbReference type="FunFam" id="1.20.1720.10:FF:000013">
    <property type="entry name" value="Related to multidrug resistance proteins"/>
    <property type="match status" value="1"/>
</dbReference>
<dbReference type="Gene3D" id="1.20.1250.20">
    <property type="entry name" value="MFS general substrate transporter like domains"/>
    <property type="match status" value="1"/>
</dbReference>
<dbReference type="Gene3D" id="1.20.1720.10">
    <property type="entry name" value="Multidrug resistance protein D"/>
    <property type="match status" value="1"/>
</dbReference>
<dbReference type="InterPro" id="IPR011701">
    <property type="entry name" value="MFS"/>
</dbReference>
<dbReference type="InterPro" id="IPR020846">
    <property type="entry name" value="MFS_dom"/>
</dbReference>
<dbReference type="InterPro" id="IPR036259">
    <property type="entry name" value="MFS_trans_sf"/>
</dbReference>
<dbReference type="PANTHER" id="PTHR23501">
    <property type="entry name" value="MAJOR FACILITATOR SUPERFAMILY"/>
    <property type="match status" value="1"/>
</dbReference>
<dbReference type="PANTHER" id="PTHR23501:SF191">
    <property type="entry name" value="VACUOLAR BASIC AMINO ACID TRANSPORTER 4"/>
    <property type="match status" value="1"/>
</dbReference>
<dbReference type="Pfam" id="PF07690">
    <property type="entry name" value="MFS_1"/>
    <property type="match status" value="1"/>
</dbReference>
<dbReference type="SUPFAM" id="SSF103473">
    <property type="entry name" value="MFS general substrate transporter"/>
    <property type="match status" value="1"/>
</dbReference>
<dbReference type="PROSITE" id="PS50850">
    <property type="entry name" value="MFS"/>
    <property type="match status" value="1"/>
</dbReference>
<comment type="function">
    <text evidence="4">Efflux transporter. Confers resistance to a variety of toxic compounds.</text>
</comment>
<comment type="subcellular location">
    <subcellularLocation>
        <location evidence="2 3">Vacuole membrane</location>
        <topology evidence="2 3">Multi-pass membrane protein</topology>
    </subcellularLocation>
</comment>
<comment type="induction">
    <text evidence="4">By nitrogen starvation.</text>
</comment>
<comment type="similarity">
    <text evidence="5">Belongs to the major facilitator superfamily.</text>
</comment>
<sequence>MVDQVNLATEQTSLLYPEVSRKKEELSVNKWTILPALWVGGFLSALDMTIVASLYPVIGSEFKLMNNASYIVTAYLITNTAFQPLYGRLSDIFGRRPTVVFANAAFTLGTFWCGISRSLPELCMARALAGIGGGGLGTMSSIISSDIVSLRERGTWQGITNIVWGIGGSLGGPLGGLIAQRWGWRTAFHFQVPMGILSTILVAWRVRVKPTVRNSNASLLSRIDYLGSFLLVTGITALVVTFNMGGDAFPWVSPVIITLLVSSVLILFAFYWVEKNIAVEPIAPVEILSQPTPLNVCLGNFFNAFCSFVIVYELPLFFETTLLMPSSEAGVRIFPYVISTSVGSLCSGLYMKKTGRYRNLVIAGFFFMLMGIVSFAVLTSFGHRTPLILISLCLAMTGCSYGMNLTSTLIAIISSLAPEEQAVATGLSYLFRATGSVIGISLSQTTTLSILMKQLASNLKDDPDKDDLIRRLRESISIIPNLPKDIQKLVIKSYATAFTWTFALVAIIAFAGFWCSLRIKQFYLHTSVDRS</sequence>
<reference key="1">
    <citation type="journal article" date="1998" name="Mol. Cell. Biol.">
        <title>The role of fnx1, a fission yeast multidrug resistance protein, in the transition of cells to a quiescent G0 state.</title>
        <authorList>
            <person name="Dimitrov K."/>
            <person name="Sazer S."/>
        </authorList>
    </citation>
    <scope>NUCLEOTIDE SEQUENCE [GENOMIC DNA]</scope>
    <scope>FUNCTION</scope>
    <scope>INDUCTION</scope>
    <source>
        <strain>972 / ATCC 24843</strain>
    </source>
</reference>
<reference key="2">
    <citation type="journal article" date="2002" name="Nature">
        <title>The genome sequence of Schizosaccharomyces pombe.</title>
        <authorList>
            <person name="Wood V."/>
            <person name="Gwilliam R."/>
            <person name="Rajandream M.A."/>
            <person name="Lyne M.H."/>
            <person name="Lyne R."/>
            <person name="Stewart A."/>
            <person name="Sgouros J.G."/>
            <person name="Peat N."/>
            <person name="Hayles J."/>
            <person name="Baker S.G."/>
            <person name="Basham D."/>
            <person name="Bowman S."/>
            <person name="Brooks K."/>
            <person name="Brown D."/>
            <person name="Brown S."/>
            <person name="Chillingworth T."/>
            <person name="Churcher C.M."/>
            <person name="Collins M."/>
            <person name="Connor R."/>
            <person name="Cronin A."/>
            <person name="Davis P."/>
            <person name="Feltwell T."/>
            <person name="Fraser A."/>
            <person name="Gentles S."/>
            <person name="Goble A."/>
            <person name="Hamlin N."/>
            <person name="Harris D.E."/>
            <person name="Hidalgo J."/>
            <person name="Hodgson G."/>
            <person name="Holroyd S."/>
            <person name="Hornsby T."/>
            <person name="Howarth S."/>
            <person name="Huckle E.J."/>
            <person name="Hunt S."/>
            <person name="Jagels K."/>
            <person name="James K.D."/>
            <person name="Jones L."/>
            <person name="Jones M."/>
            <person name="Leather S."/>
            <person name="McDonald S."/>
            <person name="McLean J."/>
            <person name="Mooney P."/>
            <person name="Moule S."/>
            <person name="Mungall K.L."/>
            <person name="Murphy L.D."/>
            <person name="Niblett D."/>
            <person name="Odell C."/>
            <person name="Oliver K."/>
            <person name="O'Neil S."/>
            <person name="Pearson D."/>
            <person name="Quail M.A."/>
            <person name="Rabbinowitsch E."/>
            <person name="Rutherford K.M."/>
            <person name="Rutter S."/>
            <person name="Saunders D."/>
            <person name="Seeger K."/>
            <person name="Sharp S."/>
            <person name="Skelton J."/>
            <person name="Simmonds M.N."/>
            <person name="Squares R."/>
            <person name="Squares S."/>
            <person name="Stevens K."/>
            <person name="Taylor K."/>
            <person name="Taylor R.G."/>
            <person name="Tivey A."/>
            <person name="Walsh S.V."/>
            <person name="Warren T."/>
            <person name="Whitehead S."/>
            <person name="Woodward J.R."/>
            <person name="Volckaert G."/>
            <person name="Aert R."/>
            <person name="Robben J."/>
            <person name="Grymonprez B."/>
            <person name="Weltjens I."/>
            <person name="Vanstreels E."/>
            <person name="Rieger M."/>
            <person name="Schaefer M."/>
            <person name="Mueller-Auer S."/>
            <person name="Gabel C."/>
            <person name="Fuchs M."/>
            <person name="Duesterhoeft A."/>
            <person name="Fritzc C."/>
            <person name="Holzer E."/>
            <person name="Moestl D."/>
            <person name="Hilbert H."/>
            <person name="Borzym K."/>
            <person name="Langer I."/>
            <person name="Beck A."/>
            <person name="Lehrach H."/>
            <person name="Reinhardt R."/>
            <person name="Pohl T.M."/>
            <person name="Eger P."/>
            <person name="Zimmermann W."/>
            <person name="Wedler H."/>
            <person name="Wambutt R."/>
            <person name="Purnelle B."/>
            <person name="Goffeau A."/>
            <person name="Cadieu E."/>
            <person name="Dreano S."/>
            <person name="Gloux S."/>
            <person name="Lelaure V."/>
            <person name="Mottier S."/>
            <person name="Galibert F."/>
            <person name="Aves S.J."/>
            <person name="Xiang Z."/>
            <person name="Hunt C."/>
            <person name="Moore K."/>
            <person name="Hurst S.M."/>
            <person name="Lucas M."/>
            <person name="Rochet M."/>
            <person name="Gaillardin C."/>
            <person name="Tallada V.A."/>
            <person name="Garzon A."/>
            <person name="Thode G."/>
            <person name="Daga R.R."/>
            <person name="Cruzado L."/>
            <person name="Jimenez J."/>
            <person name="Sanchez M."/>
            <person name="del Rey F."/>
            <person name="Benito J."/>
            <person name="Dominguez A."/>
            <person name="Revuelta J.L."/>
            <person name="Moreno S."/>
            <person name="Armstrong J."/>
            <person name="Forsburg S.L."/>
            <person name="Cerutti L."/>
            <person name="Lowe T."/>
            <person name="McCombie W.R."/>
            <person name="Paulsen I."/>
            <person name="Potashkin J."/>
            <person name="Shpakovski G.V."/>
            <person name="Ussery D."/>
            <person name="Barrell B.G."/>
            <person name="Nurse P."/>
        </authorList>
    </citation>
    <scope>NUCLEOTIDE SEQUENCE [LARGE SCALE GENOMIC DNA]</scope>
    <source>
        <strain>972 / ATCC 24843</strain>
    </source>
</reference>
<reference key="3">
    <citation type="journal article" date="2000" name="Genes Cells">
        <title>Large-scale screening of intracellular protein localization in living fission yeast cells by the use of a GFP-fusion genomic DNA library.</title>
        <authorList>
            <person name="Ding D.-Q."/>
            <person name="Tomita Y."/>
            <person name="Yamamoto A."/>
            <person name="Chikashige Y."/>
            <person name="Haraguchi T."/>
            <person name="Hiraoka Y."/>
        </authorList>
    </citation>
    <scope>NUCLEOTIDE SEQUENCE [LARGE SCALE GENOMIC DNA] OF 292-462</scope>
    <scope>SUBCELLULAR LOCATION</scope>
    <source>
        <strain>ATCC 38364 / 968</strain>
    </source>
</reference>
<reference key="4">
    <citation type="journal article" date="2006" name="Nat. Biotechnol.">
        <title>ORFeome cloning and global analysis of protein localization in the fission yeast Schizosaccharomyces pombe.</title>
        <authorList>
            <person name="Matsuyama A."/>
            <person name="Arai R."/>
            <person name="Yashiroda Y."/>
            <person name="Shirai A."/>
            <person name="Kamata A."/>
            <person name="Sekido S."/>
            <person name="Kobayashi Y."/>
            <person name="Hashimoto A."/>
            <person name="Hamamoto M."/>
            <person name="Hiraoka Y."/>
            <person name="Horinouchi S."/>
            <person name="Yoshida M."/>
        </authorList>
    </citation>
    <scope>SUBCELLULAR LOCATION [LARGE SCALE ANALYSIS]</scope>
</reference>
<organism>
    <name type="scientific">Schizosaccharomyces pombe (strain 972 / ATCC 24843)</name>
    <name type="common">Fission yeast</name>
    <dbReference type="NCBI Taxonomy" id="284812"/>
    <lineage>
        <taxon>Eukaryota</taxon>
        <taxon>Fungi</taxon>
        <taxon>Dikarya</taxon>
        <taxon>Ascomycota</taxon>
        <taxon>Taphrinomycotina</taxon>
        <taxon>Schizosaccharomycetes</taxon>
        <taxon>Schizosaccharomycetales</taxon>
        <taxon>Schizosaccharomycetaceae</taxon>
        <taxon>Schizosaccharomyces</taxon>
    </lineage>
</organism>
<keyword id="KW-0472">Membrane</keyword>
<keyword id="KW-1185">Reference proteome</keyword>
<keyword id="KW-0346">Stress response</keyword>
<keyword id="KW-0812">Transmembrane</keyword>
<keyword id="KW-1133">Transmembrane helix</keyword>
<keyword id="KW-0813">Transport</keyword>
<keyword id="KW-0926">Vacuole</keyword>
<name>FNX1_SCHPO</name>
<proteinExistence type="evidence at transcript level"/>
<protein>
    <recommendedName>
        <fullName>Multidrug resistance protein fnx1</fullName>
    </recommendedName>
</protein>
<evidence type="ECO:0000255" key="1"/>
<evidence type="ECO:0000269" key="2">
    <source>
    </source>
</evidence>
<evidence type="ECO:0000269" key="3">
    <source>
    </source>
</evidence>
<evidence type="ECO:0000269" key="4">
    <source>
    </source>
</evidence>
<evidence type="ECO:0000305" key="5"/>
<gene>
    <name type="primary">fnx1</name>
    <name type="ORF">SPBC12C2.13c</name>
    <name type="ORF">SPBC21D10.04c</name>
</gene>
<accession>Q09752</accession>
<accession>Q9URP7</accession>
<accession>Q9USV8</accession>
<accession>Q9UTY2</accession>